<dbReference type="EC" id="1.14.-.-"/>
<dbReference type="EMBL" id="M24523">
    <property type="protein sequence ID" value="AAA22720.1"/>
    <property type="molecule type" value="Genomic_DNA"/>
</dbReference>
<dbReference type="EMBL" id="CP002183">
    <property type="protein sequence ID" value="ADM38013.1"/>
    <property type="molecule type" value="Genomic_DNA"/>
</dbReference>
<dbReference type="SMR" id="P27632"/>
<dbReference type="KEGG" id="bss:BSUW23_09845"/>
<dbReference type="HOGENOM" id="CLU_033716_0_2_9"/>
<dbReference type="Proteomes" id="UP000002233">
    <property type="component" value="Chromosome"/>
</dbReference>
<dbReference type="GO" id="GO:0020037">
    <property type="term" value="F:heme binding"/>
    <property type="evidence" value="ECO:0007669"/>
    <property type="project" value="InterPro"/>
</dbReference>
<dbReference type="GO" id="GO:0005506">
    <property type="term" value="F:iron ion binding"/>
    <property type="evidence" value="ECO:0007669"/>
    <property type="project" value="InterPro"/>
</dbReference>
<dbReference type="GO" id="GO:0004497">
    <property type="term" value="F:monooxygenase activity"/>
    <property type="evidence" value="ECO:0007669"/>
    <property type="project" value="UniProtKB-KW"/>
</dbReference>
<dbReference type="GO" id="GO:0016705">
    <property type="term" value="F:oxidoreductase activity, acting on paired donors, with incorporation or reduction of molecular oxygen"/>
    <property type="evidence" value="ECO:0007669"/>
    <property type="project" value="InterPro"/>
</dbReference>
<dbReference type="CDD" id="cd11032">
    <property type="entry name" value="P450_EryK-like"/>
    <property type="match status" value="1"/>
</dbReference>
<dbReference type="FunFam" id="1.10.630.10:FF:000018">
    <property type="entry name" value="Cytochrome P450 monooxygenase"/>
    <property type="match status" value="1"/>
</dbReference>
<dbReference type="Gene3D" id="1.10.630.10">
    <property type="entry name" value="Cytochrome P450"/>
    <property type="match status" value="1"/>
</dbReference>
<dbReference type="InterPro" id="IPR001128">
    <property type="entry name" value="Cyt_P450"/>
</dbReference>
<dbReference type="InterPro" id="IPR002397">
    <property type="entry name" value="Cyt_P450_B"/>
</dbReference>
<dbReference type="InterPro" id="IPR017972">
    <property type="entry name" value="Cyt_P450_CS"/>
</dbReference>
<dbReference type="InterPro" id="IPR036396">
    <property type="entry name" value="Cyt_P450_sf"/>
</dbReference>
<dbReference type="PANTHER" id="PTHR46696:SF1">
    <property type="entry name" value="CYTOCHROME P450 YJIB-RELATED"/>
    <property type="match status" value="1"/>
</dbReference>
<dbReference type="PANTHER" id="PTHR46696">
    <property type="entry name" value="P450, PUTATIVE (EUROFUNG)-RELATED"/>
    <property type="match status" value="1"/>
</dbReference>
<dbReference type="Pfam" id="PF00067">
    <property type="entry name" value="p450"/>
    <property type="match status" value="1"/>
</dbReference>
<dbReference type="PRINTS" id="PR00359">
    <property type="entry name" value="BP450"/>
</dbReference>
<dbReference type="PRINTS" id="PR00385">
    <property type="entry name" value="P450"/>
</dbReference>
<dbReference type="SUPFAM" id="SSF48264">
    <property type="entry name" value="Cytochrome P450"/>
    <property type="match status" value="1"/>
</dbReference>
<dbReference type="PROSITE" id="PS00086">
    <property type="entry name" value="CYTOCHROME_P450"/>
    <property type="match status" value="1"/>
</dbReference>
<gene>
    <name type="primary">cyp109</name>
    <name type="ordered locus">BSUW23_09845</name>
</gene>
<organism>
    <name type="scientific">Bacillus spizizenii (strain ATCC 23059 / NRRL B-14472 / W23)</name>
    <name type="common">Bacillus subtilis subsp. spizizenii</name>
    <dbReference type="NCBI Taxonomy" id="655816"/>
    <lineage>
        <taxon>Bacteria</taxon>
        <taxon>Bacillati</taxon>
        <taxon>Bacillota</taxon>
        <taxon>Bacilli</taxon>
        <taxon>Bacillales</taxon>
        <taxon>Bacillaceae</taxon>
        <taxon>Bacillus</taxon>
    </lineage>
</organism>
<protein>
    <recommendedName>
        <fullName>Cytochrome P450 109</fullName>
        <ecNumber>1.14.-.-</ecNumber>
    </recommendedName>
    <alternativeName>
        <fullName>ORF405</fullName>
    </alternativeName>
</protein>
<reference key="1">
    <citation type="journal article" date="1991" name="Gene">
        <title>Variations and coding features of the sequence spanning the replication terminus of Bacillus subtilis 168 and W23 chromosomes.</title>
        <authorList>
            <person name="Ahn K.S."/>
            <person name="Wake R.G."/>
        </authorList>
    </citation>
    <scope>NUCLEOTIDE SEQUENCE [GENOMIC DNA]</scope>
    <source>
        <strain>ATCC 23059 / NRRL B-14472 / W23</strain>
    </source>
</reference>
<reference key="2">
    <citation type="journal article" date="2011" name="Microbiology">
        <title>The genome sequence of Bacillus subtilis subsp. spizizenii W23: insights into speciation within the B. subtilis complex and into the history of B. subtilis genetics.</title>
        <authorList>
            <person name="Zeigler D.R."/>
        </authorList>
    </citation>
    <scope>NUCLEOTIDE SEQUENCE [LARGE SCALE GENOMIC DNA]</scope>
    <source>
        <strain>ATCC 23059 / NRRL B-14472 / W23</strain>
    </source>
</reference>
<comment type="function">
    <text>Cytochromes P450 are a group of heme-thiolate monooxygenases. They oxidize a variety of structurally unrelated compounds, including steroids, fatty acids, and xenobiotics.</text>
</comment>
<comment type="cofactor">
    <cofactor evidence="1">
        <name>heme</name>
        <dbReference type="ChEBI" id="CHEBI:30413"/>
    </cofactor>
</comment>
<comment type="similarity">
    <text evidence="2">Belongs to the cytochrome P450 family.</text>
</comment>
<name>CPXM_BACSH</name>
<evidence type="ECO:0000250" key="1"/>
<evidence type="ECO:0000305" key="2"/>
<sequence length="405" mass="45846">MTNQTARSSKKERYANLIPMEELHSEKDRLFPFPIYDKLRRESPVRYDPLRDCWDVFKYDDVQFVLKNPKLFSSKRGIQTESILTMDPPKHTKLRALVSRAFTPKAVKQLETRIKDVTAFLLQEARQKSTIDIIEDFAGPLPVIIIAEMLGAPIEDRHLIKTYSDVLVAGAKDSSDKAVADMVHNRRDGHAFLSDYFRDILSKRRAEPKEDLMTMLLQAEIDGEYLTEEQLIGFCILLLVAGNETTTNLIANAVRYLTEDSVVQQQVRQNTDNVANVIEETLRYYSPVQAIGRVATEDTELGGVFIKKGSSVISWIASANRDEDKFCKPDCFKIDRPSYPHLSFGFGIHFCLGAPLARLEANIALSSLLSMSACIEKAAHDEKLEAIPSPFVFGVKRLPVRITFK</sequence>
<accession>P27632</accession>
<accession>E0TY13</accession>
<proteinExistence type="inferred from homology"/>
<feature type="chain" id="PRO_0000052223" description="Cytochrome P450 109">
    <location>
        <begin position="1"/>
        <end position="405"/>
    </location>
</feature>
<feature type="binding site" description="axial binding residue" evidence="1">
    <location>
        <position position="351"/>
    </location>
    <ligand>
        <name>heme</name>
        <dbReference type="ChEBI" id="CHEBI:30413"/>
    </ligand>
    <ligandPart>
        <name>Fe</name>
        <dbReference type="ChEBI" id="CHEBI:18248"/>
    </ligandPart>
</feature>
<keyword id="KW-0349">Heme</keyword>
<keyword id="KW-0408">Iron</keyword>
<keyword id="KW-0479">Metal-binding</keyword>
<keyword id="KW-0503">Monooxygenase</keyword>
<keyword id="KW-0560">Oxidoreductase</keyword>